<name>PCP_CLOPE</name>
<feature type="chain" id="PRO_0000184715" description="Pyrrolidone-carboxylate peptidase">
    <location>
        <begin position="1"/>
        <end position="213"/>
    </location>
</feature>
<feature type="active site" evidence="1">
    <location>
        <position position="78"/>
    </location>
</feature>
<feature type="active site" evidence="1">
    <location>
        <position position="141"/>
    </location>
</feature>
<feature type="active site" evidence="1">
    <location>
        <position position="165"/>
    </location>
</feature>
<reference key="1">
    <citation type="journal article" date="2002" name="Proc. Natl. Acad. Sci. U.S.A.">
        <title>Complete genome sequence of Clostridium perfringens, an anaerobic flesh-eater.</title>
        <authorList>
            <person name="Shimizu T."/>
            <person name="Ohtani K."/>
            <person name="Hirakawa H."/>
            <person name="Ohshima K."/>
            <person name="Yamashita A."/>
            <person name="Shiba T."/>
            <person name="Ogasawara N."/>
            <person name="Hattori M."/>
            <person name="Kuhara S."/>
            <person name="Hayashi H."/>
        </authorList>
    </citation>
    <scope>NUCLEOTIDE SEQUENCE [LARGE SCALE GENOMIC DNA]</scope>
    <source>
        <strain>13 / Type A</strain>
    </source>
</reference>
<accession>Q8XKH1</accession>
<gene>
    <name evidence="1" type="primary">pcp</name>
    <name type="ordered locus">CPE1425</name>
</gene>
<organism>
    <name type="scientific">Clostridium perfringens (strain 13 / Type A)</name>
    <dbReference type="NCBI Taxonomy" id="195102"/>
    <lineage>
        <taxon>Bacteria</taxon>
        <taxon>Bacillati</taxon>
        <taxon>Bacillota</taxon>
        <taxon>Clostridia</taxon>
        <taxon>Eubacteriales</taxon>
        <taxon>Clostridiaceae</taxon>
        <taxon>Clostridium</taxon>
    </lineage>
</organism>
<keyword id="KW-0963">Cytoplasm</keyword>
<keyword id="KW-0378">Hydrolase</keyword>
<keyword id="KW-0645">Protease</keyword>
<keyword id="KW-1185">Reference proteome</keyword>
<keyword id="KW-0788">Thiol protease</keyword>
<sequence length="213" mass="23147">MKVLITGFDPFGGESINPALEAVKMIPENIEGAQVIKLEIPTVFRKSLEKIEEKIEEINPDVVISIGQAGGRFGVTPERVAINMDDARIEDNEGNQPIDISIYEDGESAYFSNLPIKAMVKEMVDNGIPASVSNTAGTFVCNHVMYGVLYLVNKKYKNIRAGFIHVPYIPAQVVNKPNTPSMAINDIAKGLELSIKAIVLNDNDIKTVGGAVC</sequence>
<dbReference type="EC" id="3.4.19.3" evidence="1"/>
<dbReference type="EMBL" id="BA000016">
    <property type="protein sequence ID" value="BAB81131.1"/>
    <property type="status" value="ALT_INIT"/>
    <property type="molecule type" value="Genomic_DNA"/>
</dbReference>
<dbReference type="RefSeq" id="WP_041707812.1">
    <property type="nucleotide sequence ID" value="NC_003366.1"/>
</dbReference>
<dbReference type="SMR" id="Q8XKH1"/>
<dbReference type="STRING" id="195102.gene:10490689"/>
<dbReference type="MEROPS" id="C15.001"/>
<dbReference type="KEGG" id="cpe:CPE1425"/>
<dbReference type="HOGENOM" id="CLU_043960_4_0_9"/>
<dbReference type="Proteomes" id="UP000000818">
    <property type="component" value="Chromosome"/>
</dbReference>
<dbReference type="GO" id="GO:0005829">
    <property type="term" value="C:cytosol"/>
    <property type="evidence" value="ECO:0007669"/>
    <property type="project" value="InterPro"/>
</dbReference>
<dbReference type="GO" id="GO:0016920">
    <property type="term" value="F:pyroglutamyl-peptidase activity"/>
    <property type="evidence" value="ECO:0007669"/>
    <property type="project" value="UniProtKB-UniRule"/>
</dbReference>
<dbReference type="GO" id="GO:0006508">
    <property type="term" value="P:proteolysis"/>
    <property type="evidence" value="ECO:0007669"/>
    <property type="project" value="UniProtKB-KW"/>
</dbReference>
<dbReference type="CDD" id="cd00501">
    <property type="entry name" value="Peptidase_C15"/>
    <property type="match status" value="1"/>
</dbReference>
<dbReference type="FunFam" id="3.40.630.20:FF:000001">
    <property type="entry name" value="Pyrrolidone-carboxylate peptidase"/>
    <property type="match status" value="1"/>
</dbReference>
<dbReference type="Gene3D" id="3.40.630.20">
    <property type="entry name" value="Peptidase C15, pyroglutamyl peptidase I-like"/>
    <property type="match status" value="1"/>
</dbReference>
<dbReference type="HAMAP" id="MF_00417">
    <property type="entry name" value="Pyrrolid_peptidase"/>
    <property type="match status" value="1"/>
</dbReference>
<dbReference type="InterPro" id="IPR000816">
    <property type="entry name" value="Peptidase_C15"/>
</dbReference>
<dbReference type="InterPro" id="IPR016125">
    <property type="entry name" value="Peptidase_C15-like"/>
</dbReference>
<dbReference type="InterPro" id="IPR036440">
    <property type="entry name" value="Peptidase_C15-like_sf"/>
</dbReference>
<dbReference type="InterPro" id="IPR029762">
    <property type="entry name" value="PGP-I_bact-type"/>
</dbReference>
<dbReference type="InterPro" id="IPR033694">
    <property type="entry name" value="PGPEP1_Cys_AS"/>
</dbReference>
<dbReference type="InterPro" id="IPR033693">
    <property type="entry name" value="PGPEP1_Glu_AS"/>
</dbReference>
<dbReference type="NCBIfam" id="NF009676">
    <property type="entry name" value="PRK13197.1"/>
    <property type="match status" value="1"/>
</dbReference>
<dbReference type="NCBIfam" id="TIGR00504">
    <property type="entry name" value="pyro_pdase"/>
    <property type="match status" value="1"/>
</dbReference>
<dbReference type="PANTHER" id="PTHR23402">
    <property type="entry name" value="PROTEASE FAMILY C15 PYROGLUTAMYL-PEPTIDASE I-RELATED"/>
    <property type="match status" value="1"/>
</dbReference>
<dbReference type="PANTHER" id="PTHR23402:SF1">
    <property type="entry name" value="PYROGLUTAMYL-PEPTIDASE I"/>
    <property type="match status" value="1"/>
</dbReference>
<dbReference type="Pfam" id="PF01470">
    <property type="entry name" value="Peptidase_C15"/>
    <property type="match status" value="1"/>
</dbReference>
<dbReference type="PIRSF" id="PIRSF015592">
    <property type="entry name" value="Prld-crbxl_pptds"/>
    <property type="match status" value="1"/>
</dbReference>
<dbReference type="PRINTS" id="PR00706">
    <property type="entry name" value="PYROGLUPTASE"/>
</dbReference>
<dbReference type="SUPFAM" id="SSF53182">
    <property type="entry name" value="Pyrrolidone carboxyl peptidase (pyroglutamate aminopeptidase)"/>
    <property type="match status" value="1"/>
</dbReference>
<dbReference type="PROSITE" id="PS01334">
    <property type="entry name" value="PYRASE_CYS"/>
    <property type="match status" value="1"/>
</dbReference>
<dbReference type="PROSITE" id="PS01333">
    <property type="entry name" value="PYRASE_GLU"/>
    <property type="match status" value="1"/>
</dbReference>
<evidence type="ECO:0000255" key="1">
    <source>
        <dbReference type="HAMAP-Rule" id="MF_00417"/>
    </source>
</evidence>
<evidence type="ECO:0000305" key="2"/>
<comment type="function">
    <text evidence="1">Removes 5-oxoproline from various penultimate amino acid residues except L-proline.</text>
</comment>
<comment type="catalytic activity">
    <reaction evidence="1">
        <text>Release of an N-terminal pyroglutamyl group from a polypeptide, the second amino acid generally not being Pro.</text>
        <dbReference type="EC" id="3.4.19.3"/>
    </reaction>
</comment>
<comment type="subunit">
    <text evidence="1">Homotetramer.</text>
</comment>
<comment type="subcellular location">
    <subcellularLocation>
        <location evidence="1">Cytoplasm</location>
    </subcellularLocation>
</comment>
<comment type="similarity">
    <text evidence="1">Belongs to the peptidase C15 family.</text>
</comment>
<comment type="sequence caution" evidence="2">
    <conflict type="erroneous initiation">
        <sequence resource="EMBL-CDS" id="BAB81131"/>
    </conflict>
</comment>
<proteinExistence type="inferred from homology"/>
<protein>
    <recommendedName>
        <fullName evidence="1">Pyrrolidone-carboxylate peptidase</fullName>
        <ecNumber evidence="1">3.4.19.3</ecNumber>
    </recommendedName>
    <alternativeName>
        <fullName evidence="1">5-oxoprolyl-peptidase</fullName>
    </alternativeName>
    <alternativeName>
        <fullName evidence="1">Pyroglutamyl-peptidase I</fullName>
        <shortName evidence="1">PGP-I</shortName>
        <shortName evidence="1">Pyrase</shortName>
    </alternativeName>
</protein>